<evidence type="ECO:0000255" key="1">
    <source>
        <dbReference type="HAMAP-Rule" id="MF_00736"/>
    </source>
</evidence>
<evidence type="ECO:0000305" key="2"/>
<evidence type="ECO:0007829" key="3">
    <source>
        <dbReference type="PDB" id="1ACI"/>
    </source>
</evidence>
<evidence type="ECO:0007829" key="4">
    <source>
        <dbReference type="PDB" id="1HC8"/>
    </source>
</evidence>
<comment type="function">
    <text>Forms part of the ribosomal stalk which helps the ribosome interact with GTP-bound translation factors.</text>
</comment>
<comment type="subunit">
    <text>Part of the ribosomal stalk of the 50S ribosomal subunit. Interacts with L10 and the large rRNA to form the base of the stalk. L10 forms an elongated spine to which 2 L12 dimers bind in a sequential fashion forming a pentameric L10(L12)2(L12)2 complex.</text>
</comment>
<comment type="PTM">
    <text evidence="1">One or more lysine residues are methylated.</text>
</comment>
<comment type="similarity">
    <text evidence="1">Belongs to the universal ribosomal protein uL11 family.</text>
</comment>
<keyword id="KW-0002">3D-structure</keyword>
<keyword id="KW-0903">Direct protein sequencing</keyword>
<keyword id="KW-0488">Methylation</keyword>
<keyword id="KW-0687">Ribonucleoprotein</keyword>
<keyword id="KW-0689">Ribosomal protein</keyword>
<keyword id="KW-0694">RNA-binding</keyword>
<keyword id="KW-0699">rRNA-binding</keyword>
<organism>
    <name type="scientific">Geobacillus stearothermophilus</name>
    <name type="common">Bacillus stearothermophilus</name>
    <dbReference type="NCBI Taxonomy" id="1422"/>
    <lineage>
        <taxon>Bacteria</taxon>
        <taxon>Bacillati</taxon>
        <taxon>Bacillota</taxon>
        <taxon>Bacilli</taxon>
        <taxon>Bacillales</taxon>
        <taxon>Anoxybacillaceae</taxon>
        <taxon>Geobacillus</taxon>
    </lineage>
</organism>
<name>RL11_GEOSE</name>
<feature type="chain" id="PRO_0000104244" description="Large ribosomal subunit protein uL11">
    <location>
        <begin position="1" status="less than"/>
        <end position="133"/>
    </location>
</feature>
<feature type="non-terminal residue">
    <location>
        <position position="1"/>
    </location>
</feature>
<feature type="strand" evidence="3">
    <location>
        <begin position="61"/>
        <end position="64"/>
    </location>
</feature>
<feature type="helix" evidence="4">
    <location>
        <begin position="67"/>
        <end position="75"/>
    </location>
</feature>
<feature type="strand" evidence="3">
    <location>
        <begin position="77"/>
        <end position="79"/>
    </location>
</feature>
<feature type="turn" evidence="4">
    <location>
        <begin position="84"/>
        <end position="86"/>
    </location>
</feature>
<feature type="strand" evidence="4">
    <location>
        <begin position="90"/>
        <end position="92"/>
    </location>
</feature>
<feature type="helix" evidence="4">
    <location>
        <begin position="94"/>
        <end position="103"/>
    </location>
</feature>
<feature type="helix" evidence="4">
    <location>
        <begin position="105"/>
        <end position="107"/>
    </location>
</feature>
<feature type="helix" evidence="4">
    <location>
        <begin position="113"/>
        <end position="127"/>
    </location>
</feature>
<feature type="strand" evidence="4">
    <location>
        <begin position="129"/>
        <end position="131"/>
    </location>
</feature>
<dbReference type="PIR" id="S55555">
    <property type="entry name" value="S55555"/>
</dbReference>
<dbReference type="PDB" id="1ACI">
    <property type="method" value="NMR"/>
    <property type="chains" value="A=59-133"/>
</dbReference>
<dbReference type="PDB" id="1FOW">
    <property type="method" value="NMR"/>
    <property type="chains" value="A=59-133"/>
</dbReference>
<dbReference type="PDB" id="1FOX">
    <property type="method" value="NMR"/>
    <property type="chains" value="A=59-133"/>
</dbReference>
<dbReference type="PDB" id="1FOY">
    <property type="method" value="NMR"/>
    <property type="chains" value="A=59-133"/>
</dbReference>
<dbReference type="PDB" id="1HC8">
    <property type="method" value="X-ray"/>
    <property type="resolution" value="2.80 A"/>
    <property type="chains" value="A/B=58-132"/>
</dbReference>
<dbReference type="PDB" id="1QA6">
    <property type="method" value="X-ray"/>
    <property type="resolution" value="2.80 A"/>
    <property type="chains" value="A/B=63-129"/>
</dbReference>
<dbReference type="PDB" id="1Y39">
    <property type="method" value="X-ray"/>
    <property type="resolution" value="2.80 A"/>
    <property type="chains" value="A/B=58-133"/>
</dbReference>
<dbReference type="PDB" id="2FOW">
    <property type="method" value="NMR"/>
    <property type="chains" value="A=59-133"/>
</dbReference>
<dbReference type="PDBsum" id="1ACI"/>
<dbReference type="PDBsum" id="1FOW"/>
<dbReference type="PDBsum" id="1FOX"/>
<dbReference type="PDBsum" id="1FOY"/>
<dbReference type="PDBsum" id="1HC8"/>
<dbReference type="PDBsum" id="1QA6"/>
<dbReference type="PDBsum" id="1Y39"/>
<dbReference type="PDBsum" id="2FOW"/>
<dbReference type="SMR" id="P56210"/>
<dbReference type="EvolutionaryTrace" id="P56210"/>
<dbReference type="GO" id="GO:0022625">
    <property type="term" value="C:cytosolic large ribosomal subunit"/>
    <property type="evidence" value="ECO:0007669"/>
    <property type="project" value="TreeGrafter"/>
</dbReference>
<dbReference type="GO" id="GO:1990904">
    <property type="term" value="C:ribonucleoprotein complex"/>
    <property type="evidence" value="ECO:0000315"/>
    <property type="project" value="CAFA"/>
</dbReference>
<dbReference type="GO" id="GO:0070180">
    <property type="term" value="F:large ribosomal subunit rRNA binding"/>
    <property type="evidence" value="ECO:0000315"/>
    <property type="project" value="CAFA"/>
</dbReference>
<dbReference type="GO" id="GO:0019843">
    <property type="term" value="F:rRNA binding"/>
    <property type="evidence" value="ECO:0000269"/>
    <property type="project" value="DisProt"/>
</dbReference>
<dbReference type="GO" id="GO:0003735">
    <property type="term" value="F:structural constituent of ribosome"/>
    <property type="evidence" value="ECO:0007669"/>
    <property type="project" value="InterPro"/>
</dbReference>
<dbReference type="GO" id="GO:0006412">
    <property type="term" value="P:translation"/>
    <property type="evidence" value="ECO:0007669"/>
    <property type="project" value="InterPro"/>
</dbReference>
<dbReference type="CDD" id="cd00349">
    <property type="entry name" value="Ribosomal_L11"/>
    <property type="match status" value="1"/>
</dbReference>
<dbReference type="DisProt" id="DP00512"/>
<dbReference type="FunFam" id="1.10.10.250:FF:000001">
    <property type="entry name" value="50S ribosomal protein L11"/>
    <property type="match status" value="1"/>
</dbReference>
<dbReference type="FunFam" id="3.30.1550.10:FF:000001">
    <property type="entry name" value="50S ribosomal protein L11"/>
    <property type="match status" value="1"/>
</dbReference>
<dbReference type="Gene3D" id="1.10.10.250">
    <property type="entry name" value="Ribosomal protein L11, C-terminal domain"/>
    <property type="match status" value="1"/>
</dbReference>
<dbReference type="Gene3D" id="3.30.1550.10">
    <property type="entry name" value="Ribosomal protein L11/L12, N-terminal domain"/>
    <property type="match status" value="1"/>
</dbReference>
<dbReference type="HAMAP" id="MF_00736">
    <property type="entry name" value="Ribosomal_uL11"/>
    <property type="match status" value="1"/>
</dbReference>
<dbReference type="InterPro" id="IPR000911">
    <property type="entry name" value="Ribosomal_uL11"/>
</dbReference>
<dbReference type="InterPro" id="IPR006519">
    <property type="entry name" value="Ribosomal_uL11_bac-typ"/>
</dbReference>
<dbReference type="InterPro" id="IPR020783">
    <property type="entry name" value="Ribosomal_uL11_C"/>
</dbReference>
<dbReference type="InterPro" id="IPR036769">
    <property type="entry name" value="Ribosomal_uL11_C_sf"/>
</dbReference>
<dbReference type="InterPro" id="IPR020785">
    <property type="entry name" value="Ribosomal_uL11_CS"/>
</dbReference>
<dbReference type="InterPro" id="IPR020784">
    <property type="entry name" value="Ribosomal_uL11_N"/>
</dbReference>
<dbReference type="InterPro" id="IPR036796">
    <property type="entry name" value="Ribosomal_uL11_N_sf"/>
</dbReference>
<dbReference type="NCBIfam" id="TIGR01632">
    <property type="entry name" value="L11_bact"/>
    <property type="match status" value="1"/>
</dbReference>
<dbReference type="PANTHER" id="PTHR11661">
    <property type="entry name" value="60S RIBOSOMAL PROTEIN L12"/>
    <property type="match status" value="1"/>
</dbReference>
<dbReference type="PANTHER" id="PTHR11661:SF1">
    <property type="entry name" value="LARGE RIBOSOMAL SUBUNIT PROTEIN UL11M"/>
    <property type="match status" value="1"/>
</dbReference>
<dbReference type="Pfam" id="PF00298">
    <property type="entry name" value="Ribosomal_L11"/>
    <property type="match status" value="1"/>
</dbReference>
<dbReference type="Pfam" id="PF03946">
    <property type="entry name" value="Ribosomal_L11_N"/>
    <property type="match status" value="1"/>
</dbReference>
<dbReference type="SMART" id="SM00649">
    <property type="entry name" value="RL11"/>
    <property type="match status" value="1"/>
</dbReference>
<dbReference type="SUPFAM" id="SSF54747">
    <property type="entry name" value="Ribosomal L11/L12e N-terminal domain"/>
    <property type="match status" value="1"/>
</dbReference>
<dbReference type="SUPFAM" id="SSF46906">
    <property type="entry name" value="Ribosomal protein L11, C-terminal domain"/>
    <property type="match status" value="1"/>
</dbReference>
<dbReference type="PROSITE" id="PS00359">
    <property type="entry name" value="RIBOSOMAL_L11"/>
    <property type="match status" value="1"/>
</dbReference>
<sequence>MKLQIPAGKANPAPPVGPALGQAGVNIMAFCKEFNARTADQAGLIIPVEITVFEDRSFTFITKTPPAAVLLKKAAGIESGSGEPNRNKVATIKRDKVREIAELKMPDLNAASIEAAMRMIEGTARSMGIVVED</sequence>
<reference key="1">
    <citation type="journal article" date="1995" name="J. Mol. Biol.">
        <title>Stabilization of a ribosomal RNA tertiary structure by ribosomal protein L11.</title>
        <authorList>
            <person name="Xing Y."/>
            <person name="Draper D.E."/>
        </authorList>
    </citation>
    <scope>NUCLEOTIDE SEQUENCE [GENOMIC DNA]</scope>
    <scope>PARTIAL PROTEIN SEQUENCE</scope>
</reference>
<reference key="2">
    <citation type="journal article" date="1999" name="Science">
        <title>Crystal structure of a conserved ribosomal protein-RNA complex.</title>
        <authorList>
            <person name="Conn G.L."/>
            <person name="Draper D.E."/>
            <person name="Lattman E.E."/>
            <person name="Gittis A.G."/>
        </authorList>
    </citation>
    <scope>X-RAY CRYSTALLOGRAPHY (2.8 ANGSTROMS) OF 63-129</scope>
</reference>
<reference key="3">
    <citation type="journal article" date="1997" name="Nat. Struct. Biol.">
        <title>High resolution solution structure of ribosomal protein L11-C76, a helical protein with a flexible loop that becomes structured upon binding to RNA.</title>
        <authorList>
            <person name="Markus M.A."/>
            <person name="Hinck A.P."/>
            <person name="Huang S."/>
            <person name="Draper D.E."/>
            <person name="Torchia D.A."/>
        </authorList>
    </citation>
    <scope>STRUCTURE BY NMR OF 59-133</scope>
</reference>
<reference key="4">
    <citation type="journal article" date="1999" name="Nature">
        <title>Placement of protein and RNA structures into a 5 A-resolution map of the 50S ribosomal subunit.</title>
        <authorList>
            <person name="Ban N."/>
            <person name="Nissen P."/>
            <person name="Hansen J."/>
            <person name="Capel M."/>
            <person name="Moore P.B."/>
            <person name="Steitz T.A."/>
        </authorList>
    </citation>
    <scope>3D-STRUCTURE MODELING OF 63-129 ONTO THE H.MARISMORTUI 50S RIBOSOME</scope>
</reference>
<proteinExistence type="evidence at protein level"/>
<accession>P56210</accession>
<protein>
    <recommendedName>
        <fullName evidence="1">Large ribosomal subunit protein uL11</fullName>
    </recommendedName>
    <alternativeName>
        <fullName evidence="2">50S ribosomal protein L11</fullName>
    </alternativeName>
</protein>
<gene>
    <name evidence="1" type="primary">rplK</name>
</gene>